<dbReference type="EMBL" id="AE007317">
    <property type="protein sequence ID" value="AAL00790.1"/>
    <property type="molecule type" value="Genomic_DNA"/>
</dbReference>
<dbReference type="PIR" id="A99520">
    <property type="entry name" value="A99520"/>
</dbReference>
<dbReference type="RefSeq" id="NP_359579.1">
    <property type="nucleotide sequence ID" value="NC_003098.1"/>
</dbReference>
<dbReference type="RefSeq" id="WP_000980827.1">
    <property type="nucleotide sequence ID" value="NC_003098.1"/>
</dbReference>
<dbReference type="SMR" id="P0A3Q8"/>
<dbReference type="STRING" id="171101.spr1988"/>
<dbReference type="KEGG" id="spr:spr1988"/>
<dbReference type="PATRIC" id="fig|171101.6.peg.2152"/>
<dbReference type="eggNOG" id="COG0580">
    <property type="taxonomic scope" value="Bacteria"/>
</dbReference>
<dbReference type="HOGENOM" id="CLU_020019_9_2_9"/>
<dbReference type="Proteomes" id="UP000000586">
    <property type="component" value="Chromosome"/>
</dbReference>
<dbReference type="GO" id="GO:0005886">
    <property type="term" value="C:plasma membrane"/>
    <property type="evidence" value="ECO:0000318"/>
    <property type="project" value="GO_Central"/>
</dbReference>
<dbReference type="GO" id="GO:0015254">
    <property type="term" value="F:glycerol channel activity"/>
    <property type="evidence" value="ECO:0000318"/>
    <property type="project" value="GO_Central"/>
</dbReference>
<dbReference type="GO" id="GO:0015793">
    <property type="term" value="P:glycerol transmembrane transport"/>
    <property type="evidence" value="ECO:0000318"/>
    <property type="project" value="GO_Central"/>
</dbReference>
<dbReference type="Gene3D" id="1.20.1080.10">
    <property type="entry name" value="Glycerol uptake facilitator protein"/>
    <property type="match status" value="1"/>
</dbReference>
<dbReference type="InterPro" id="IPR023271">
    <property type="entry name" value="Aquaporin-like"/>
</dbReference>
<dbReference type="InterPro" id="IPR000425">
    <property type="entry name" value="MIP"/>
</dbReference>
<dbReference type="InterPro" id="IPR050363">
    <property type="entry name" value="MIP/Aquaporin"/>
</dbReference>
<dbReference type="InterPro" id="IPR022357">
    <property type="entry name" value="MIP_CS"/>
</dbReference>
<dbReference type="NCBIfam" id="TIGR00861">
    <property type="entry name" value="MIP"/>
    <property type="match status" value="1"/>
</dbReference>
<dbReference type="PANTHER" id="PTHR43829">
    <property type="entry name" value="AQUAPORIN OR AQUAGLYCEROPORIN RELATED"/>
    <property type="match status" value="1"/>
</dbReference>
<dbReference type="PANTHER" id="PTHR43829:SF9">
    <property type="entry name" value="AQUAPORIN-9"/>
    <property type="match status" value="1"/>
</dbReference>
<dbReference type="Pfam" id="PF00230">
    <property type="entry name" value="MIP"/>
    <property type="match status" value="1"/>
</dbReference>
<dbReference type="PRINTS" id="PR00783">
    <property type="entry name" value="MINTRINSICP"/>
</dbReference>
<dbReference type="SUPFAM" id="SSF81338">
    <property type="entry name" value="Aquaporin-like"/>
    <property type="match status" value="1"/>
</dbReference>
<dbReference type="PROSITE" id="PS00221">
    <property type="entry name" value="MIP"/>
    <property type="match status" value="1"/>
</dbReference>
<accession>P0A3Q8</accession>
<accession>P52281</accession>
<gene>
    <name type="primary">glpF</name>
    <name type="ordered locus">spr1988</name>
</gene>
<sequence>MMNELFGEFLGTLILILLGNGVVAGVVLPKTKSNSSGWIVITMGWGIAVAVAVFVSGKLSPAHLNPAVTIGVALKGGLPWASVLPYILAQFAGAMLGQILVWLQFKPHYEAEENAGNILATFSTGPAIKDTVSNLISEILGTFVLVLTIFALGLYDFQAGIGTFAVGTLIVGIGLSLGGTTGYALNPARDLGPRIMHSILPIPNKGDGDWSYAWIPVVGPVIGAALAVLVFSLF</sequence>
<feature type="chain" id="PRO_0000064091" description="Glycerol uptake facilitator protein">
    <location>
        <begin position="1"/>
        <end position="234"/>
    </location>
</feature>
<feature type="transmembrane region" description="Helical" evidence="2">
    <location>
        <begin position="9"/>
        <end position="29"/>
    </location>
</feature>
<feature type="transmembrane region" description="Helical" evidence="2">
    <location>
        <begin position="37"/>
        <end position="57"/>
    </location>
</feature>
<feature type="transmembrane region" description="Helical" evidence="2">
    <location>
        <begin position="61"/>
        <end position="81"/>
    </location>
</feature>
<feature type="transmembrane region" description="Helical" evidence="2">
    <location>
        <begin position="83"/>
        <end position="103"/>
    </location>
</feature>
<feature type="transmembrane region" description="Helical" evidence="2">
    <location>
        <begin position="135"/>
        <end position="155"/>
    </location>
</feature>
<feature type="transmembrane region" description="Helical" evidence="2">
    <location>
        <begin position="159"/>
        <end position="179"/>
    </location>
</feature>
<feature type="transmembrane region" description="Helical" evidence="2">
    <location>
        <begin position="214"/>
        <end position="234"/>
    </location>
</feature>
<feature type="short sequence motif" description="NPA 1" evidence="3">
    <location>
        <begin position="65"/>
        <end position="67"/>
    </location>
</feature>
<feature type="short sequence motif" description="NPA 2" evidence="3">
    <location>
        <begin position="186"/>
        <end position="188"/>
    </location>
</feature>
<reference key="1">
    <citation type="journal article" date="2001" name="J. Bacteriol.">
        <title>Genome of the bacterium Streptococcus pneumoniae strain R6.</title>
        <authorList>
            <person name="Hoskins J."/>
            <person name="Alborn W.E. Jr."/>
            <person name="Arnold J."/>
            <person name="Blaszczak L.C."/>
            <person name="Burgett S."/>
            <person name="DeHoff B.S."/>
            <person name="Estrem S.T."/>
            <person name="Fritz L."/>
            <person name="Fu D.-J."/>
            <person name="Fuller W."/>
            <person name="Geringer C."/>
            <person name="Gilmour R."/>
            <person name="Glass J.S."/>
            <person name="Khoja H."/>
            <person name="Kraft A.R."/>
            <person name="Lagace R.E."/>
            <person name="LeBlanc D.J."/>
            <person name="Lee L.N."/>
            <person name="Lefkowitz E.J."/>
            <person name="Lu J."/>
            <person name="Matsushima P."/>
            <person name="McAhren S.M."/>
            <person name="McHenney M."/>
            <person name="McLeaster K."/>
            <person name="Mundy C.W."/>
            <person name="Nicas T.I."/>
            <person name="Norris F.H."/>
            <person name="O'Gara M."/>
            <person name="Peery R.B."/>
            <person name="Robertson G.T."/>
            <person name="Rockey P."/>
            <person name="Sun P.-M."/>
            <person name="Winkler M.E."/>
            <person name="Yang Y."/>
            <person name="Young-Bellido M."/>
            <person name="Zhao G."/>
            <person name="Zook C.A."/>
            <person name="Baltz R.H."/>
            <person name="Jaskunas S.R."/>
            <person name="Rosteck P.R. Jr."/>
            <person name="Skatrud P.L."/>
            <person name="Glass J.I."/>
        </authorList>
    </citation>
    <scope>NUCLEOTIDE SEQUENCE [LARGE SCALE GENOMIC DNA]</scope>
    <source>
        <strain>ATCC BAA-255 / R6</strain>
    </source>
</reference>
<comment type="function">
    <text evidence="1">Mediates glycerol diffusion across the cytoplasmic membrane via a pore-type mechanism.</text>
</comment>
<comment type="catalytic activity">
    <reaction evidence="1">
        <text>glycerol(in) = glycerol(out)</text>
        <dbReference type="Rhea" id="RHEA:29675"/>
        <dbReference type="ChEBI" id="CHEBI:17754"/>
    </reaction>
</comment>
<comment type="subcellular location">
    <subcellularLocation>
        <location evidence="3">Cell membrane</location>
        <topology evidence="2">Multi-pass membrane protein</topology>
    </subcellularLocation>
</comment>
<comment type="domain">
    <text evidence="3">Aquaporins contain two tandem repeats each containing three membrane-spanning domains and a pore-forming loop with the signature motif Asn-Pro-Ala (NPA).</text>
</comment>
<comment type="similarity">
    <text evidence="3">Belongs to the MIP/aquaporin (TC 1.A.8) family.</text>
</comment>
<evidence type="ECO:0000250" key="1">
    <source>
        <dbReference type="UniProtKB" id="P0AER0"/>
    </source>
</evidence>
<evidence type="ECO:0000255" key="2"/>
<evidence type="ECO:0000305" key="3"/>
<keyword id="KW-1003">Cell membrane</keyword>
<keyword id="KW-0472">Membrane</keyword>
<keyword id="KW-1185">Reference proteome</keyword>
<keyword id="KW-0677">Repeat</keyword>
<keyword id="KW-0812">Transmembrane</keyword>
<keyword id="KW-1133">Transmembrane helix</keyword>
<keyword id="KW-0813">Transport</keyword>
<organism>
    <name type="scientific">Streptococcus pneumoniae (strain ATCC BAA-255 / R6)</name>
    <dbReference type="NCBI Taxonomy" id="171101"/>
    <lineage>
        <taxon>Bacteria</taxon>
        <taxon>Bacillati</taxon>
        <taxon>Bacillota</taxon>
        <taxon>Bacilli</taxon>
        <taxon>Lactobacillales</taxon>
        <taxon>Streptococcaceae</taxon>
        <taxon>Streptococcus</taxon>
    </lineage>
</organism>
<name>GLPF_STRR6</name>
<protein>
    <recommendedName>
        <fullName evidence="1">Glycerol uptake facilitator protein</fullName>
    </recommendedName>
</protein>
<proteinExistence type="inferred from homology"/>